<reference key="1">
    <citation type="submission" date="2005-03" db="EMBL/GenBank/DDBJ databases">
        <title>Brevibacillus brevis strain 47, complete genome.</title>
        <authorList>
            <person name="Hosoyama A."/>
            <person name="Yamada R."/>
            <person name="Hongo Y."/>
            <person name="Terui Y."/>
            <person name="Ankai A."/>
            <person name="Masuyama W."/>
            <person name="Sekiguchi M."/>
            <person name="Takeda T."/>
            <person name="Asano K."/>
            <person name="Ohji S."/>
            <person name="Ichikawa N."/>
            <person name="Narita S."/>
            <person name="Aoki N."/>
            <person name="Miura H."/>
            <person name="Matsushita S."/>
            <person name="Sekigawa T."/>
            <person name="Yamagata H."/>
            <person name="Yoshikawa H."/>
            <person name="Udaka S."/>
            <person name="Tanikawa S."/>
            <person name="Fujita N."/>
        </authorList>
    </citation>
    <scope>NUCLEOTIDE SEQUENCE [LARGE SCALE GENOMIC DNA]</scope>
    <source>
        <strain>47 / JCM 6285 / NBRC 100599</strain>
    </source>
</reference>
<accession>C0ZIL1</accession>
<evidence type="ECO:0000255" key="1">
    <source>
        <dbReference type="HAMAP-Rule" id="MF_01461"/>
    </source>
</evidence>
<comment type="function">
    <text evidence="1">Transmembrane (T) component of an energy-coupling factor (ECF) ABC-transporter complex. Unlike classic ABC transporters this ECF transporter provides the energy necessary to transport a number of different substrates.</text>
</comment>
<comment type="subunit">
    <text evidence="1">Forms a stable energy-coupling factor (ECF) transporter complex composed of 2 membrane-embedded substrate-binding proteins (S component), 2 ATP-binding proteins (A component) and 2 transmembrane proteins (T component). May be able to interact with more than 1 S component at a time (By similarity).</text>
</comment>
<comment type="subcellular location">
    <subcellularLocation>
        <location evidence="1">Cell membrane</location>
        <topology evidence="1">Multi-pass membrane protein</topology>
    </subcellularLocation>
</comment>
<comment type="similarity">
    <text evidence="1">Belongs to the energy-coupling factor EcfT family.</text>
</comment>
<protein>
    <recommendedName>
        <fullName evidence="1">Energy-coupling factor transporter transmembrane protein EcfT</fullName>
        <shortName evidence="1">ECF transporter T component EcfT</shortName>
    </recommendedName>
</protein>
<proteinExistence type="inferred from homology"/>
<sequence>MLQNIAIGQYVPGQSFLHRADPRSKLLFIILFATLIFLANNTVTYAILIGFTLYAALLSRLSLSYILKSLKPVWILILFTVVLHIFITKGGTVYFQWGWFTVEEQGVRQAIFISLRLGLLILISSLLTLTTSPIDLTEGLERLLGPLGKIGIPVHDIALMMSIALRFIPTLMEETDKIIKAQTARGANFTSGSLVRRAKNLIPIAIPLFVSAFRRAEELALAMEARGYRGGVGRTRLNKLTFTWRDGIVAVVSVILVIVIGWWRT</sequence>
<keyword id="KW-1003">Cell membrane</keyword>
<keyword id="KW-0472">Membrane</keyword>
<keyword id="KW-1185">Reference proteome</keyword>
<keyword id="KW-0812">Transmembrane</keyword>
<keyword id="KW-1133">Transmembrane helix</keyword>
<keyword id="KW-0813">Transport</keyword>
<feature type="chain" id="PRO_0000408985" description="Energy-coupling factor transporter transmembrane protein EcfT">
    <location>
        <begin position="1"/>
        <end position="265"/>
    </location>
</feature>
<feature type="transmembrane region" description="Helical" evidence="1">
    <location>
        <begin position="29"/>
        <end position="49"/>
    </location>
</feature>
<feature type="transmembrane region" description="Helical" evidence="1">
    <location>
        <begin position="73"/>
        <end position="93"/>
    </location>
</feature>
<feature type="transmembrane region" description="Helical" evidence="1">
    <location>
        <begin position="110"/>
        <end position="130"/>
    </location>
</feature>
<feature type="transmembrane region" description="Helical" evidence="1">
    <location>
        <begin position="143"/>
        <end position="163"/>
    </location>
</feature>
<feature type="transmembrane region" description="Helical" evidence="1">
    <location>
        <begin position="242"/>
        <end position="262"/>
    </location>
</feature>
<name>ECFT_BREBN</name>
<gene>
    <name evidence="1" type="primary">ecfT</name>
    <name type="ordered locus">BBR47_02520</name>
</gene>
<organism>
    <name type="scientific">Brevibacillus brevis (strain 47 / JCM 6285 / NBRC 100599)</name>
    <dbReference type="NCBI Taxonomy" id="358681"/>
    <lineage>
        <taxon>Bacteria</taxon>
        <taxon>Bacillati</taxon>
        <taxon>Bacillota</taxon>
        <taxon>Bacilli</taxon>
        <taxon>Bacillales</taxon>
        <taxon>Paenibacillaceae</taxon>
        <taxon>Brevibacillus</taxon>
    </lineage>
</organism>
<dbReference type="EMBL" id="AP008955">
    <property type="protein sequence ID" value="BAH41229.1"/>
    <property type="molecule type" value="Genomic_DNA"/>
</dbReference>
<dbReference type="RefSeq" id="WP_012684003.1">
    <property type="nucleotide sequence ID" value="NC_012491.1"/>
</dbReference>
<dbReference type="SMR" id="C0ZIL1"/>
<dbReference type="STRING" id="358681.BBR47_02520"/>
<dbReference type="KEGG" id="bbe:BBR47_02520"/>
<dbReference type="eggNOG" id="COG0619">
    <property type="taxonomic scope" value="Bacteria"/>
</dbReference>
<dbReference type="HOGENOM" id="CLU_056469_2_2_9"/>
<dbReference type="Proteomes" id="UP000001877">
    <property type="component" value="Chromosome"/>
</dbReference>
<dbReference type="GO" id="GO:0005886">
    <property type="term" value="C:plasma membrane"/>
    <property type="evidence" value="ECO:0007669"/>
    <property type="project" value="UniProtKB-SubCell"/>
</dbReference>
<dbReference type="GO" id="GO:0022857">
    <property type="term" value="F:transmembrane transporter activity"/>
    <property type="evidence" value="ECO:0007669"/>
    <property type="project" value="UniProtKB-UniRule"/>
</dbReference>
<dbReference type="CDD" id="cd16914">
    <property type="entry name" value="EcfT"/>
    <property type="match status" value="1"/>
</dbReference>
<dbReference type="HAMAP" id="MF_01461">
    <property type="entry name" value="EcfT"/>
    <property type="match status" value="1"/>
</dbReference>
<dbReference type="InterPro" id="IPR003339">
    <property type="entry name" value="ABC/ECF_trnsptr_transmembrane"/>
</dbReference>
<dbReference type="InterPro" id="IPR024919">
    <property type="entry name" value="EcfT"/>
</dbReference>
<dbReference type="PANTHER" id="PTHR33514">
    <property type="entry name" value="PROTEIN ABCI12, CHLOROPLASTIC"/>
    <property type="match status" value="1"/>
</dbReference>
<dbReference type="PANTHER" id="PTHR33514:SF13">
    <property type="entry name" value="PROTEIN ABCI12, CHLOROPLASTIC"/>
    <property type="match status" value="1"/>
</dbReference>
<dbReference type="Pfam" id="PF02361">
    <property type="entry name" value="CbiQ"/>
    <property type="match status" value="1"/>
</dbReference>